<proteinExistence type="inferred from homology"/>
<accession>Q5F9E0</accession>
<reference key="1">
    <citation type="submission" date="2003-03" db="EMBL/GenBank/DDBJ databases">
        <title>The complete genome sequence of Neisseria gonorrhoeae.</title>
        <authorList>
            <person name="Lewis L.A."/>
            <person name="Gillaspy A.F."/>
            <person name="McLaughlin R.E."/>
            <person name="Gipson M."/>
            <person name="Ducey T.F."/>
            <person name="Ownbey T."/>
            <person name="Hartman K."/>
            <person name="Nydick C."/>
            <person name="Carson M.B."/>
            <person name="Vaughn J."/>
            <person name="Thomson C."/>
            <person name="Song L."/>
            <person name="Lin S."/>
            <person name="Yuan X."/>
            <person name="Najar F."/>
            <person name="Zhan M."/>
            <person name="Ren Q."/>
            <person name="Zhu H."/>
            <person name="Qi S."/>
            <person name="Kenton S.M."/>
            <person name="Lai H."/>
            <person name="White J.D."/>
            <person name="Clifton S."/>
            <person name="Roe B.A."/>
            <person name="Dyer D.W."/>
        </authorList>
    </citation>
    <scope>NUCLEOTIDE SEQUENCE [LARGE SCALE GENOMIC DNA]</scope>
    <source>
        <strain>ATCC 700825 / FA 1090</strain>
    </source>
</reference>
<sequence>MNIEVEMKVLDERMADFIPAYATEGSAGLDLRACLDEEVVLQPGETFLVPTGLAIYLANPAYAAVLLPRSGLGHKHGIVLGNLVGLIDSDYQGELKVSLWNRGSEPFAVKPFERIAQMVIVPVVQAGFKRVEEFVGSSRGEGGFGSTGSH</sequence>
<feature type="chain" id="PRO_0000231413" description="Deoxyuridine 5'-triphosphate nucleotidohydrolase">
    <location>
        <begin position="1"/>
        <end position="150"/>
    </location>
</feature>
<feature type="binding site" evidence="1">
    <location>
        <begin position="69"/>
        <end position="71"/>
    </location>
    <ligand>
        <name>substrate</name>
    </ligand>
</feature>
<feature type="binding site" evidence="1">
    <location>
        <position position="82"/>
    </location>
    <ligand>
        <name>substrate</name>
    </ligand>
</feature>
<feature type="binding site" evidence="1">
    <location>
        <begin position="86"/>
        <end position="88"/>
    </location>
    <ligand>
        <name>substrate</name>
    </ligand>
</feature>
<feature type="binding site" evidence="1">
    <location>
        <position position="96"/>
    </location>
    <ligand>
        <name>substrate</name>
    </ligand>
</feature>
<evidence type="ECO:0000255" key="1">
    <source>
        <dbReference type="HAMAP-Rule" id="MF_00116"/>
    </source>
</evidence>
<keyword id="KW-0378">Hydrolase</keyword>
<keyword id="KW-0460">Magnesium</keyword>
<keyword id="KW-0479">Metal-binding</keyword>
<keyword id="KW-0546">Nucleotide metabolism</keyword>
<keyword id="KW-1185">Reference proteome</keyword>
<organism>
    <name type="scientific">Neisseria gonorrhoeae (strain ATCC 700825 / FA 1090)</name>
    <dbReference type="NCBI Taxonomy" id="242231"/>
    <lineage>
        <taxon>Bacteria</taxon>
        <taxon>Pseudomonadati</taxon>
        <taxon>Pseudomonadota</taxon>
        <taxon>Betaproteobacteria</taxon>
        <taxon>Neisseriales</taxon>
        <taxon>Neisseriaceae</taxon>
        <taxon>Neisseria</taxon>
    </lineage>
</organism>
<gene>
    <name evidence="1" type="primary">dut</name>
    <name type="ordered locus">NGO_0459</name>
</gene>
<comment type="function">
    <text evidence="1">This enzyme is involved in nucleotide metabolism: it produces dUMP, the immediate precursor of thymidine nucleotides and it decreases the intracellular concentration of dUTP so that uracil cannot be incorporated into DNA.</text>
</comment>
<comment type="catalytic activity">
    <reaction evidence="1">
        <text>dUTP + H2O = dUMP + diphosphate + H(+)</text>
        <dbReference type="Rhea" id="RHEA:10248"/>
        <dbReference type="ChEBI" id="CHEBI:15377"/>
        <dbReference type="ChEBI" id="CHEBI:15378"/>
        <dbReference type="ChEBI" id="CHEBI:33019"/>
        <dbReference type="ChEBI" id="CHEBI:61555"/>
        <dbReference type="ChEBI" id="CHEBI:246422"/>
        <dbReference type="EC" id="3.6.1.23"/>
    </reaction>
</comment>
<comment type="cofactor">
    <cofactor evidence="1">
        <name>Mg(2+)</name>
        <dbReference type="ChEBI" id="CHEBI:18420"/>
    </cofactor>
</comment>
<comment type="pathway">
    <text evidence="1">Pyrimidine metabolism; dUMP biosynthesis; dUMP from dCTP (dUTP route): step 2/2.</text>
</comment>
<comment type="similarity">
    <text evidence="1">Belongs to the dUTPase family.</text>
</comment>
<dbReference type="EC" id="3.6.1.23" evidence="1"/>
<dbReference type="EMBL" id="AE004969">
    <property type="protein sequence ID" value="AAW89197.1"/>
    <property type="molecule type" value="Genomic_DNA"/>
</dbReference>
<dbReference type="RefSeq" id="WP_010951049.1">
    <property type="nucleotide sequence ID" value="NC_002946.2"/>
</dbReference>
<dbReference type="RefSeq" id="YP_207609.1">
    <property type="nucleotide sequence ID" value="NC_002946.2"/>
</dbReference>
<dbReference type="SMR" id="Q5F9E0"/>
<dbReference type="STRING" id="242231.NGO_0459"/>
<dbReference type="KEGG" id="ngo:NGO_0459"/>
<dbReference type="PATRIC" id="fig|242231.10.peg.550"/>
<dbReference type="HOGENOM" id="CLU_068508_1_1_4"/>
<dbReference type="UniPathway" id="UPA00610">
    <property type="reaction ID" value="UER00666"/>
</dbReference>
<dbReference type="Proteomes" id="UP000000535">
    <property type="component" value="Chromosome"/>
</dbReference>
<dbReference type="GO" id="GO:0004170">
    <property type="term" value="F:dUTP diphosphatase activity"/>
    <property type="evidence" value="ECO:0007669"/>
    <property type="project" value="UniProtKB-UniRule"/>
</dbReference>
<dbReference type="GO" id="GO:0000287">
    <property type="term" value="F:magnesium ion binding"/>
    <property type="evidence" value="ECO:0007669"/>
    <property type="project" value="UniProtKB-UniRule"/>
</dbReference>
<dbReference type="GO" id="GO:0006226">
    <property type="term" value="P:dUMP biosynthetic process"/>
    <property type="evidence" value="ECO:0007669"/>
    <property type="project" value="UniProtKB-UniRule"/>
</dbReference>
<dbReference type="GO" id="GO:0046081">
    <property type="term" value="P:dUTP catabolic process"/>
    <property type="evidence" value="ECO:0007669"/>
    <property type="project" value="InterPro"/>
</dbReference>
<dbReference type="CDD" id="cd07557">
    <property type="entry name" value="trimeric_dUTPase"/>
    <property type="match status" value="1"/>
</dbReference>
<dbReference type="FunFam" id="2.70.40.10:FF:000002">
    <property type="entry name" value="dUTP diphosphatase"/>
    <property type="match status" value="1"/>
</dbReference>
<dbReference type="Gene3D" id="2.70.40.10">
    <property type="match status" value="1"/>
</dbReference>
<dbReference type="HAMAP" id="MF_00116">
    <property type="entry name" value="dUTPase_bact"/>
    <property type="match status" value="1"/>
</dbReference>
<dbReference type="InterPro" id="IPR008181">
    <property type="entry name" value="dUTPase"/>
</dbReference>
<dbReference type="InterPro" id="IPR029054">
    <property type="entry name" value="dUTPase-like"/>
</dbReference>
<dbReference type="InterPro" id="IPR036157">
    <property type="entry name" value="dUTPase-like_sf"/>
</dbReference>
<dbReference type="InterPro" id="IPR033704">
    <property type="entry name" value="dUTPase_trimeric"/>
</dbReference>
<dbReference type="NCBIfam" id="TIGR00576">
    <property type="entry name" value="dut"/>
    <property type="match status" value="1"/>
</dbReference>
<dbReference type="NCBIfam" id="NF001862">
    <property type="entry name" value="PRK00601.1"/>
    <property type="match status" value="1"/>
</dbReference>
<dbReference type="PANTHER" id="PTHR11241">
    <property type="entry name" value="DEOXYURIDINE 5'-TRIPHOSPHATE NUCLEOTIDOHYDROLASE"/>
    <property type="match status" value="1"/>
</dbReference>
<dbReference type="PANTHER" id="PTHR11241:SF0">
    <property type="entry name" value="DEOXYURIDINE 5'-TRIPHOSPHATE NUCLEOTIDOHYDROLASE"/>
    <property type="match status" value="1"/>
</dbReference>
<dbReference type="Pfam" id="PF00692">
    <property type="entry name" value="dUTPase"/>
    <property type="match status" value="1"/>
</dbReference>
<dbReference type="SUPFAM" id="SSF51283">
    <property type="entry name" value="dUTPase-like"/>
    <property type="match status" value="1"/>
</dbReference>
<protein>
    <recommendedName>
        <fullName evidence="1">Deoxyuridine 5'-triphosphate nucleotidohydrolase</fullName>
        <shortName evidence="1">dUTPase</shortName>
        <ecNumber evidence="1">3.6.1.23</ecNumber>
    </recommendedName>
    <alternativeName>
        <fullName evidence="1">dUTP pyrophosphatase</fullName>
    </alternativeName>
</protein>
<name>DUT_NEIG1</name>